<keyword id="KW-0007">Acetylation</keyword>
<keyword id="KW-0067">ATP-binding</keyword>
<keyword id="KW-0963">Cytoplasm</keyword>
<keyword id="KW-0206">Cytoskeleton</keyword>
<keyword id="KW-0378">Hydrolase</keyword>
<keyword id="KW-0547">Nucleotide-binding</keyword>
<keyword id="KW-0558">Oxidation</keyword>
<evidence type="ECO:0000250" key="1"/>
<evidence type="ECO:0000250" key="2">
    <source>
        <dbReference type="UniProtKB" id="P68137"/>
    </source>
</evidence>
<evidence type="ECO:0000305" key="3"/>
<comment type="function">
    <text>Actins are highly conserved proteins that are involved in various types of cell motility and are ubiquitously expressed in all eukaryotic cells.</text>
</comment>
<comment type="function">
    <text>Multiple isoforms are involved in various cellular functions such as cytoskeleton structure, cell mobility, chromosome movement and muscle contraction.</text>
</comment>
<comment type="catalytic activity">
    <reaction evidence="2">
        <text>ATP + H2O = ADP + phosphate + H(+)</text>
        <dbReference type="Rhea" id="RHEA:13065"/>
        <dbReference type="ChEBI" id="CHEBI:15377"/>
        <dbReference type="ChEBI" id="CHEBI:15378"/>
        <dbReference type="ChEBI" id="CHEBI:30616"/>
        <dbReference type="ChEBI" id="CHEBI:43474"/>
        <dbReference type="ChEBI" id="CHEBI:456216"/>
    </reaction>
</comment>
<comment type="subcellular location">
    <subcellularLocation>
        <location>Cytoplasm</location>
        <location>Cytoskeleton</location>
    </subcellularLocation>
</comment>
<comment type="PTM">
    <text evidence="1">Oxidation of Met-45 to form methionine sulfoxide promotes actin filament depolymerization. Methionine sulfoxide is produced stereospecifically, but it is not known whether the (S)-S-oxide or the (R)-S-oxide is produced (By similarity).</text>
</comment>
<comment type="miscellaneous">
    <text>There are at least 4 actin isoforms expressed during artemia development.</text>
</comment>
<comment type="similarity">
    <text evidence="3">Belongs to the actin family.</text>
</comment>
<name>ACT4_ARTSX</name>
<sequence length="376" mass="41838">MCDDEVAALVVDNGSGMCKAGFAGDDAPRAVFPSIVGRPRHQGVMVGMGQKDSYVGDEAQSKRGILTLKYPIEHGIVTNWDDMEKIWHHTFYNELRVAPEEHPVLLTEAPLNPKANREKMTQIMFETFNTPAMYVAIQAVLSLYASGRTTGIVLDSGDGVSHTVPIYEGYALPHAILRLDLAGRDLTDYLMKILTERGYSFTTTAEREIVRDIKEKLCYVALDFEQEMATAASSTSLEKSYELPDGQVITIGNERFRCPEALFQPSFLGMESCGIHETTYNSIMKCDVDIRKDLYANTVLSGGTTMYPGIADRMQKEITALAPSTMKIKIIAPPERKYSVWIGGSILASLSTFQQMWISKQEYDESGPSIVHRKCF</sequence>
<dbReference type="EC" id="3.6.4.-" evidence="2"/>
<dbReference type="EMBL" id="X52605">
    <property type="protein sequence ID" value="CAA36838.1"/>
    <property type="molecule type" value="mRNA"/>
</dbReference>
<dbReference type="PIR" id="S11453">
    <property type="entry name" value="S11453"/>
</dbReference>
<dbReference type="SMR" id="P18603"/>
<dbReference type="GO" id="GO:0005737">
    <property type="term" value="C:cytoplasm"/>
    <property type="evidence" value="ECO:0007669"/>
    <property type="project" value="UniProtKB-KW"/>
</dbReference>
<dbReference type="GO" id="GO:0005856">
    <property type="term" value="C:cytoskeleton"/>
    <property type="evidence" value="ECO:0007669"/>
    <property type="project" value="UniProtKB-SubCell"/>
</dbReference>
<dbReference type="GO" id="GO:0005524">
    <property type="term" value="F:ATP binding"/>
    <property type="evidence" value="ECO:0007669"/>
    <property type="project" value="UniProtKB-KW"/>
</dbReference>
<dbReference type="GO" id="GO:0016787">
    <property type="term" value="F:hydrolase activity"/>
    <property type="evidence" value="ECO:0007669"/>
    <property type="project" value="UniProtKB-KW"/>
</dbReference>
<dbReference type="CDD" id="cd10224">
    <property type="entry name" value="ASKHA_NBD_actin"/>
    <property type="match status" value="1"/>
</dbReference>
<dbReference type="FunFam" id="3.30.420.40:FF:000131">
    <property type="entry name" value="Actin, alpha skeletal muscle"/>
    <property type="match status" value="1"/>
</dbReference>
<dbReference type="FunFam" id="3.30.420.40:FF:000291">
    <property type="entry name" value="Actin, alpha skeletal muscle"/>
    <property type="match status" value="1"/>
</dbReference>
<dbReference type="FunFam" id="3.90.640.10:FF:000047">
    <property type="entry name" value="Actin, alpha skeletal muscle"/>
    <property type="match status" value="1"/>
</dbReference>
<dbReference type="FunFam" id="3.30.420.40:FF:000058">
    <property type="entry name" value="Putative actin-related protein 5"/>
    <property type="match status" value="1"/>
</dbReference>
<dbReference type="Gene3D" id="3.30.420.40">
    <property type="match status" value="2"/>
</dbReference>
<dbReference type="Gene3D" id="3.90.640.10">
    <property type="entry name" value="Actin, Chain A, domain 4"/>
    <property type="match status" value="1"/>
</dbReference>
<dbReference type="InterPro" id="IPR004000">
    <property type="entry name" value="Actin"/>
</dbReference>
<dbReference type="InterPro" id="IPR020902">
    <property type="entry name" value="Actin/actin-like_CS"/>
</dbReference>
<dbReference type="InterPro" id="IPR004001">
    <property type="entry name" value="Actin_CS"/>
</dbReference>
<dbReference type="InterPro" id="IPR043129">
    <property type="entry name" value="ATPase_NBD"/>
</dbReference>
<dbReference type="PANTHER" id="PTHR11937">
    <property type="entry name" value="ACTIN"/>
    <property type="match status" value="1"/>
</dbReference>
<dbReference type="Pfam" id="PF00022">
    <property type="entry name" value="Actin"/>
    <property type="match status" value="1"/>
</dbReference>
<dbReference type="PRINTS" id="PR00190">
    <property type="entry name" value="ACTIN"/>
</dbReference>
<dbReference type="SMART" id="SM00268">
    <property type="entry name" value="ACTIN"/>
    <property type="match status" value="1"/>
</dbReference>
<dbReference type="SUPFAM" id="SSF53067">
    <property type="entry name" value="Actin-like ATPase domain"/>
    <property type="match status" value="2"/>
</dbReference>
<dbReference type="PROSITE" id="PS00406">
    <property type="entry name" value="ACTINS_1"/>
    <property type="match status" value="1"/>
</dbReference>
<dbReference type="PROSITE" id="PS00432">
    <property type="entry name" value="ACTINS_2"/>
    <property type="match status" value="1"/>
</dbReference>
<dbReference type="PROSITE" id="PS01132">
    <property type="entry name" value="ACTINS_ACT_LIKE"/>
    <property type="match status" value="1"/>
</dbReference>
<protein>
    <recommendedName>
        <fullName>Actin, clone 403</fullName>
        <ecNumber evidence="2">3.6.4.-</ecNumber>
    </recommendedName>
</protein>
<accession>P18603</accession>
<proteinExistence type="evidence at transcript level"/>
<organism>
    <name type="scientific">Artemia sp.</name>
    <name type="common">Brine shrimp</name>
    <dbReference type="NCBI Taxonomy" id="6662"/>
    <lineage>
        <taxon>Eukaryota</taxon>
        <taxon>Metazoa</taxon>
        <taxon>Ecdysozoa</taxon>
        <taxon>Arthropoda</taxon>
        <taxon>Crustacea</taxon>
        <taxon>Branchiopoda</taxon>
        <taxon>Anostraca</taxon>
        <taxon>Artemiidae</taxon>
        <taxon>Artemia</taxon>
    </lineage>
</organism>
<feature type="propeptide" id="PRO_0000000614" description="Removed in mature form" evidence="1">
    <location>
        <begin position="1"/>
        <end position="2"/>
    </location>
</feature>
<feature type="chain" id="PRO_0000000615" description="Actin, clone 403">
    <location>
        <begin position="3"/>
        <end position="376"/>
    </location>
</feature>
<feature type="modified residue" description="N-acetylaspartate" evidence="1">
    <location>
        <position position="3"/>
    </location>
</feature>
<feature type="modified residue" description="Methionine sulfoxide" evidence="1">
    <location>
        <position position="45"/>
    </location>
</feature>
<feature type="modified residue" description="Methionine sulfoxide" evidence="1">
    <location>
        <position position="48"/>
    </location>
</feature>
<reference key="1">
    <citation type="journal article" date="1990" name="Nucleic Acids Res.">
        <title>Molecular cloning and expression of four actin isoforms during Artemia development.</title>
        <authorList>
            <person name="Macias M.-T."/>
            <person name="Sastre L."/>
        </authorList>
    </citation>
    <scope>NUCLEOTIDE SEQUENCE [MRNA]</scope>
</reference>